<dbReference type="EC" id="2.7.8.-" evidence="4"/>
<dbReference type="EMBL" id="AK057811">
    <property type="protein sequence ID" value="BAB71586.1"/>
    <property type="molecule type" value="mRNA"/>
</dbReference>
<dbReference type="EMBL" id="AL392111">
    <property type="status" value="NOT_ANNOTATED_CDS"/>
    <property type="molecule type" value="Genomic_DNA"/>
</dbReference>
<dbReference type="EMBL" id="CH471083">
    <property type="protein sequence ID" value="EAW54566.1"/>
    <property type="molecule type" value="Genomic_DNA"/>
</dbReference>
<dbReference type="EMBL" id="CH471083">
    <property type="protein sequence ID" value="EAW54567.1"/>
    <property type="molecule type" value="Genomic_DNA"/>
</dbReference>
<dbReference type="EMBL" id="BC080593">
    <property type="protein sequence ID" value="AAH80593.1"/>
    <property type="status" value="ALT_INIT"/>
    <property type="molecule type" value="mRNA"/>
</dbReference>
<dbReference type="EMBL" id="BX280496">
    <property type="status" value="NOT_ANNOTATED_CDS"/>
    <property type="molecule type" value="mRNA"/>
</dbReference>
<dbReference type="CCDS" id="CCDS53543.1">
    <molecule id="Q96LT4-1"/>
</dbReference>
<dbReference type="CCDS" id="CCDS7347.1">
    <molecule id="Q96LT4-2"/>
</dbReference>
<dbReference type="RefSeq" id="NP_001167627.1">
    <molecule id="Q96LT4-1"/>
    <property type="nucleotide sequence ID" value="NM_001174156.2"/>
</dbReference>
<dbReference type="RefSeq" id="NP_653261.1">
    <molecule id="Q96LT4-2"/>
    <property type="nucleotide sequence ID" value="NM_144660.3"/>
</dbReference>
<dbReference type="RefSeq" id="XP_005269598.1">
    <molecule id="Q96LT4-1"/>
    <property type="nucleotide sequence ID" value="XM_005269541.6"/>
</dbReference>
<dbReference type="RefSeq" id="XP_011537613.1">
    <property type="nucleotide sequence ID" value="XM_011539311.1"/>
</dbReference>
<dbReference type="RefSeq" id="XP_011537614.1">
    <molecule id="Q96LT4-1"/>
    <property type="nucleotide sequence ID" value="XM_011539312.4"/>
</dbReference>
<dbReference type="RefSeq" id="XP_016871228.1">
    <property type="nucleotide sequence ID" value="XM_017015739.1"/>
</dbReference>
<dbReference type="RefSeq" id="XP_047280596.1">
    <molecule id="Q96LT4-1"/>
    <property type="nucleotide sequence ID" value="XM_047424640.1"/>
</dbReference>
<dbReference type="RefSeq" id="XP_054220846.1">
    <molecule id="Q96LT4-1"/>
    <property type="nucleotide sequence ID" value="XM_054364871.1"/>
</dbReference>
<dbReference type="RefSeq" id="XP_054220847.1">
    <molecule id="Q96LT4-1"/>
    <property type="nucleotide sequence ID" value="XM_054364872.1"/>
</dbReference>
<dbReference type="RefSeq" id="XP_054220848.1">
    <molecule id="Q96LT4-1"/>
    <property type="nucleotide sequence ID" value="XM_054364873.1"/>
</dbReference>
<dbReference type="PDB" id="8IJQ">
    <property type="method" value="EM"/>
    <property type="resolution" value="3.45 A"/>
    <property type="chains" value="A/B/C/D/E/F=144-407"/>
</dbReference>
<dbReference type="PDB" id="8IJR">
    <property type="method" value="EM"/>
    <property type="resolution" value="3.29 A"/>
    <property type="chains" value="A/B/C/D/E/F=1-415"/>
</dbReference>
<dbReference type="PDB" id="8W9W">
    <property type="method" value="EM"/>
    <property type="resolution" value="3.74 A"/>
    <property type="chains" value="A/B/C/D/E/F=144-407"/>
</dbReference>
<dbReference type="PDB" id="8W9Y">
    <property type="method" value="EM"/>
    <property type="resolution" value="3.50 A"/>
    <property type="chains" value="A/B/C/D/E/F=144-407"/>
</dbReference>
<dbReference type="PDBsum" id="8IJQ"/>
<dbReference type="PDBsum" id="8IJR"/>
<dbReference type="PDBsum" id="8W9W"/>
<dbReference type="PDBsum" id="8W9Y"/>
<dbReference type="EMDB" id="EMD-35492"/>
<dbReference type="EMDB" id="EMD-35493"/>
<dbReference type="EMDB" id="EMD-37383"/>
<dbReference type="EMDB" id="EMD-37385"/>
<dbReference type="SMR" id="Q96LT4"/>
<dbReference type="BioGRID" id="126778">
    <property type="interactions" value="8"/>
</dbReference>
<dbReference type="FunCoup" id="Q96LT4">
    <property type="interactions" value="1580"/>
</dbReference>
<dbReference type="IntAct" id="Q96LT4">
    <property type="interactions" value="6"/>
</dbReference>
<dbReference type="STRING" id="9606.ENSP00000500411"/>
<dbReference type="SwissLipids" id="SLP:000000704"/>
<dbReference type="iPTMnet" id="Q96LT4"/>
<dbReference type="PhosphoSitePlus" id="Q96LT4"/>
<dbReference type="SwissPalm" id="Q96LT4"/>
<dbReference type="BioMuta" id="SAMD8"/>
<dbReference type="DMDM" id="44888529"/>
<dbReference type="jPOST" id="Q96LT4"/>
<dbReference type="MassIVE" id="Q96LT4"/>
<dbReference type="PaxDb" id="9606-ENSP00000438042"/>
<dbReference type="PeptideAtlas" id="Q96LT4"/>
<dbReference type="ProteomicsDB" id="77245">
    <molecule id="Q96LT4-1"/>
</dbReference>
<dbReference type="ProteomicsDB" id="77246">
    <molecule id="Q96LT4-2"/>
</dbReference>
<dbReference type="Antibodypedia" id="29663">
    <property type="antibodies" value="107 antibodies from 22 providers"/>
</dbReference>
<dbReference type="DNASU" id="142891"/>
<dbReference type="Ensembl" id="ENST00000372687.4">
    <molecule id="Q96LT4-2"/>
    <property type="protein sequence ID" value="ENSP00000361772.3"/>
    <property type="gene ID" value="ENSG00000156671.15"/>
</dbReference>
<dbReference type="Ensembl" id="ENST00000542569.6">
    <molecule id="Q96LT4-1"/>
    <property type="protein sequence ID" value="ENSP00000438042.1"/>
    <property type="gene ID" value="ENSG00000156671.15"/>
</dbReference>
<dbReference type="Ensembl" id="ENST00000671800.1">
    <molecule id="Q96LT4-1"/>
    <property type="protein sequence ID" value="ENSP00000500411.1"/>
    <property type="gene ID" value="ENSG00000156671.15"/>
</dbReference>
<dbReference type="GeneID" id="142891"/>
<dbReference type="KEGG" id="hsa:142891"/>
<dbReference type="MANE-Select" id="ENST00000542569.6">
    <property type="protein sequence ID" value="ENSP00000438042.1"/>
    <property type="RefSeq nucleotide sequence ID" value="NM_001174156.2"/>
    <property type="RefSeq protein sequence ID" value="NP_001167627.1"/>
</dbReference>
<dbReference type="UCSC" id="uc001jwx.2">
    <molecule id="Q96LT4-1"/>
    <property type="organism name" value="human"/>
</dbReference>
<dbReference type="AGR" id="HGNC:26320"/>
<dbReference type="CTD" id="142891"/>
<dbReference type="DisGeNET" id="142891"/>
<dbReference type="GeneCards" id="SAMD8"/>
<dbReference type="HGNC" id="HGNC:26320">
    <property type="gene designation" value="SAMD8"/>
</dbReference>
<dbReference type="HPA" id="ENSG00000156671">
    <property type="expression patterns" value="Low tissue specificity"/>
</dbReference>
<dbReference type="MIM" id="611575">
    <property type="type" value="gene"/>
</dbReference>
<dbReference type="neXtProt" id="NX_Q96LT4"/>
<dbReference type="OpenTargets" id="ENSG00000156671"/>
<dbReference type="PharmGKB" id="PA134868247"/>
<dbReference type="VEuPathDB" id="HostDB:ENSG00000156671"/>
<dbReference type="eggNOG" id="KOG3058">
    <property type="taxonomic scope" value="Eukaryota"/>
</dbReference>
<dbReference type="GeneTree" id="ENSGT00940000155540"/>
<dbReference type="HOGENOM" id="CLU_027104_1_1_1"/>
<dbReference type="InParanoid" id="Q96LT4"/>
<dbReference type="OrthoDB" id="422827at2759"/>
<dbReference type="PAN-GO" id="Q96LT4">
    <property type="GO annotations" value="6 GO annotations based on evolutionary models"/>
</dbReference>
<dbReference type="PhylomeDB" id="Q96LT4"/>
<dbReference type="TreeFam" id="TF314547"/>
<dbReference type="PathwayCommons" id="Q96LT4"/>
<dbReference type="Reactome" id="R-HSA-1660661">
    <property type="pathway name" value="Sphingolipid de novo biosynthesis"/>
</dbReference>
<dbReference type="SignaLink" id="Q96LT4"/>
<dbReference type="BioGRID-ORCS" id="142891">
    <property type="hits" value="9 hits in 1155 CRISPR screens"/>
</dbReference>
<dbReference type="ChiTaRS" id="SAMD8">
    <property type="organism name" value="human"/>
</dbReference>
<dbReference type="GenomeRNAi" id="142891"/>
<dbReference type="Pharos" id="Q96LT4">
    <property type="development level" value="Tbio"/>
</dbReference>
<dbReference type="PRO" id="PR:Q96LT4"/>
<dbReference type="Proteomes" id="UP000005640">
    <property type="component" value="Chromosome 10"/>
</dbReference>
<dbReference type="RNAct" id="Q96LT4">
    <property type="molecule type" value="protein"/>
</dbReference>
<dbReference type="Bgee" id="ENSG00000156671">
    <property type="expression patterns" value="Expressed in medial globus pallidus and 189 other cell types or tissues"/>
</dbReference>
<dbReference type="ExpressionAtlas" id="Q96LT4">
    <property type="expression patterns" value="baseline and differential"/>
</dbReference>
<dbReference type="GO" id="GO:0005829">
    <property type="term" value="C:cytosol"/>
    <property type="evidence" value="ECO:0000314"/>
    <property type="project" value="HPA"/>
</dbReference>
<dbReference type="GO" id="GO:0005783">
    <property type="term" value="C:endoplasmic reticulum"/>
    <property type="evidence" value="ECO:0000314"/>
    <property type="project" value="HPA"/>
</dbReference>
<dbReference type="GO" id="GO:0005789">
    <property type="term" value="C:endoplasmic reticulum membrane"/>
    <property type="evidence" value="ECO:0000314"/>
    <property type="project" value="UniProtKB"/>
</dbReference>
<dbReference type="GO" id="GO:0000139">
    <property type="term" value="C:Golgi membrane"/>
    <property type="evidence" value="ECO:0000318"/>
    <property type="project" value="GO_Central"/>
</dbReference>
<dbReference type="GO" id="GO:0016020">
    <property type="term" value="C:membrane"/>
    <property type="evidence" value="ECO:0000303"/>
    <property type="project" value="UniProtKB"/>
</dbReference>
<dbReference type="GO" id="GO:0005886">
    <property type="term" value="C:plasma membrane"/>
    <property type="evidence" value="ECO:0000318"/>
    <property type="project" value="GO_Central"/>
</dbReference>
<dbReference type="GO" id="GO:0047493">
    <property type="term" value="F:ceramide cholinephosphotransferase activity"/>
    <property type="evidence" value="ECO:0000318"/>
    <property type="project" value="GO_Central"/>
</dbReference>
<dbReference type="GO" id="GO:0033188">
    <property type="term" value="F:sphingomyelin synthase activity"/>
    <property type="evidence" value="ECO:0000318"/>
    <property type="project" value="GO_Central"/>
</dbReference>
<dbReference type="GO" id="GO:0046513">
    <property type="term" value="P:ceramide biosynthetic process"/>
    <property type="evidence" value="ECO:0000314"/>
    <property type="project" value="UniProtKB"/>
</dbReference>
<dbReference type="GO" id="GO:2000303">
    <property type="term" value="P:regulation of ceramide biosynthetic process"/>
    <property type="evidence" value="ECO:0000314"/>
    <property type="project" value="UniProtKB"/>
</dbReference>
<dbReference type="GO" id="GO:0006686">
    <property type="term" value="P:sphingomyelin biosynthetic process"/>
    <property type="evidence" value="ECO:0000303"/>
    <property type="project" value="UniProtKB"/>
</dbReference>
<dbReference type="CDD" id="cd09515">
    <property type="entry name" value="SAM_SGMS1-like"/>
    <property type="match status" value="1"/>
</dbReference>
<dbReference type="FunFam" id="1.10.150.50:FF:000037">
    <property type="entry name" value="sphingomyelin synthase-related protein 1 isoform X1"/>
    <property type="match status" value="1"/>
</dbReference>
<dbReference type="Gene3D" id="1.10.150.50">
    <property type="entry name" value="Transcription Factor, Ets-1"/>
    <property type="match status" value="1"/>
</dbReference>
<dbReference type="InterPro" id="IPR001660">
    <property type="entry name" value="SAM"/>
</dbReference>
<dbReference type="InterPro" id="IPR013761">
    <property type="entry name" value="SAM/pointed_sf"/>
</dbReference>
<dbReference type="InterPro" id="IPR045221">
    <property type="entry name" value="Sphingomyelin_synth-like"/>
</dbReference>
<dbReference type="InterPro" id="IPR025749">
    <property type="entry name" value="Sphingomyelin_synth-like_dom"/>
</dbReference>
<dbReference type="PANTHER" id="PTHR21290:SF25">
    <property type="entry name" value="SPHINGOMYELIN SYNTHASE-RELATED PROTEIN 1"/>
    <property type="match status" value="1"/>
</dbReference>
<dbReference type="PANTHER" id="PTHR21290">
    <property type="entry name" value="SPHINGOMYELIN SYNTHETASE"/>
    <property type="match status" value="1"/>
</dbReference>
<dbReference type="Pfam" id="PF14360">
    <property type="entry name" value="PAP2_C"/>
    <property type="match status" value="1"/>
</dbReference>
<dbReference type="Pfam" id="PF00536">
    <property type="entry name" value="SAM_1"/>
    <property type="match status" value="1"/>
</dbReference>
<dbReference type="SMART" id="SM00454">
    <property type="entry name" value="SAM"/>
    <property type="match status" value="1"/>
</dbReference>
<dbReference type="SUPFAM" id="SSF47769">
    <property type="entry name" value="SAM/Pointed domain"/>
    <property type="match status" value="1"/>
</dbReference>
<dbReference type="PROSITE" id="PS50105">
    <property type="entry name" value="SAM_DOMAIN"/>
    <property type="match status" value="1"/>
</dbReference>
<name>SAMD8_HUMAN</name>
<comment type="function">
    <text evidence="4 5 6">Synthesizes sphingolipids through transfer of a phosphatidyl head group from a glycerophospholipid on to the primary hydroxyl of a ceramide in the lumen of the endoplasmic reticulum (PubMed:19506037, PubMed:38388831). Catalyzes the synthesis of ceramide phosphoethanolamines (CPEs) (such as N-acylsphing-4-enine 1-phosphoethanolamine) by transferring phosphoethanolamine head group, which is smaller and more hydrophilic than the phosphocholine (PC) headgroup transferred in the canonical sphingomyelin synthesis (SMS) reaction by SMS1 or SMS2, from a phosphatidylethanolamine (1,2-diacyl-sn-glycero-3-phosphoethanolamine, PE) to a ceramide (such as N-acylsphing-4-enine) (PubMed:19506037, PubMed:38388831). The larger PC prevents an efficient fit in the enzyme's catalytic pocket, leading to little or no SMS activity (PubMed:19506037, PubMed:38388831). In vitro, in the absence of ceramide, it has PLC activity with preference for phosphatidylinositol and phosphatidic acid, but also hydrolyzes phosphatidylethanolamine (PubMed:33621517, PubMed:38388831).</text>
</comment>
<comment type="catalytic activity">
    <reaction evidence="6">
        <text>an N-acylsphing-4-enine + a 1,2-diacyl-sn-glycero-3-phosphoethanolamine = an N-acylsphing-4-enine 1-phosphoethanolamine + a 1,2-diacyl-sn-glycerol</text>
        <dbReference type="Rhea" id="RHEA:36079"/>
        <dbReference type="ChEBI" id="CHEBI:17815"/>
        <dbReference type="ChEBI" id="CHEBI:52639"/>
        <dbReference type="ChEBI" id="CHEBI:64612"/>
        <dbReference type="ChEBI" id="CHEBI:73203"/>
    </reaction>
    <physiologicalReaction direction="left-to-right" evidence="10">
        <dbReference type="Rhea" id="RHEA:36080"/>
    </physiologicalReaction>
</comment>
<comment type="catalytic activity">
    <reaction evidence="4">
        <text>an N-acylsphinganine + a 1,2-diacyl-sn-glycero-3-phosphoethanolamine = an N-acylsphinganine-1-phosphoethanolamine + a 1,2-diacyl-sn-glycerol</text>
        <dbReference type="Rhea" id="RHEA:42136"/>
        <dbReference type="ChEBI" id="CHEBI:17815"/>
        <dbReference type="ChEBI" id="CHEBI:31488"/>
        <dbReference type="ChEBI" id="CHEBI:64612"/>
        <dbReference type="ChEBI" id="CHEBI:78655"/>
    </reaction>
    <physiologicalReaction direction="left-to-right" evidence="9">
        <dbReference type="Rhea" id="RHEA:42137"/>
    </physiologicalReaction>
</comment>
<comment type="catalytic activity">
    <reaction evidence="4">
        <text>an N-acyl-(4R)-4-hydroxysphinganine + a 1,2-diacyl-sn-glycero-3-phosphoethanolamine = an N-acyl-(4R)-4-hydroxysphinganine-1-phosphoethanolamine + a 1,2-diacyl-sn-glycerol</text>
        <dbReference type="Rhea" id="RHEA:42148"/>
        <dbReference type="ChEBI" id="CHEBI:17815"/>
        <dbReference type="ChEBI" id="CHEBI:31998"/>
        <dbReference type="ChEBI" id="CHEBI:64612"/>
        <dbReference type="ChEBI" id="CHEBI:78657"/>
    </reaction>
    <physiologicalReaction direction="left-to-right" evidence="9">
        <dbReference type="Rhea" id="RHEA:42149"/>
    </physiologicalReaction>
</comment>
<comment type="catalytic activity">
    <reaction evidence="4">
        <text>N-hexadecanoylsphinganine + a 1,2-diacyl-sn-glycero-3-phosphoethanolamine = N-hexadecanoyl-sphinganine-1-phosphoethanolamine + a 1,2-diacyl-sn-glycerol</text>
        <dbReference type="Rhea" id="RHEA:42128"/>
        <dbReference type="ChEBI" id="CHEBI:17815"/>
        <dbReference type="ChEBI" id="CHEBI:64612"/>
        <dbReference type="ChEBI" id="CHEBI:67042"/>
        <dbReference type="ChEBI" id="CHEBI:78654"/>
    </reaction>
    <physiologicalReaction direction="left-to-right" evidence="9">
        <dbReference type="Rhea" id="RHEA:42129"/>
    </physiologicalReaction>
</comment>
<comment type="catalytic activity">
    <reaction evidence="4">
        <text>N-hexadecanoyl-(4R)-hydroxysphinganine + a 1,2-diacyl-sn-glycero-3-phosphoethanolamine = N-hexadecanoyl-(4R)-hydroxysphinganine-1-phosphoethanolamine + a 1,2-diacyl-sn-glycerol</text>
        <dbReference type="Rhea" id="RHEA:42144"/>
        <dbReference type="ChEBI" id="CHEBI:17815"/>
        <dbReference type="ChEBI" id="CHEBI:64612"/>
        <dbReference type="ChEBI" id="CHEBI:65107"/>
        <dbReference type="ChEBI" id="CHEBI:78656"/>
    </reaction>
    <physiologicalReaction direction="left-to-right" evidence="9">
        <dbReference type="Rhea" id="RHEA:42145"/>
    </physiologicalReaction>
</comment>
<comment type="pathway">
    <text evidence="8">Sphingolipid metabolism.</text>
</comment>
<comment type="subcellular location">
    <subcellularLocation>
        <location evidence="4">Endoplasmic reticulum membrane</location>
        <topology evidence="4">Multi-pass membrane protein</topology>
    </subcellularLocation>
</comment>
<comment type="alternative products">
    <event type="alternative splicing"/>
    <isoform>
        <id>Q96LT4-1</id>
        <name>1</name>
        <sequence type="displayed"/>
    </isoform>
    <isoform>
        <id>Q96LT4-2</id>
        <name>2</name>
        <sequence type="described" ref="VSP_038403 VSP_038404"/>
    </isoform>
</comment>
<comment type="domain">
    <text>The SAM domain is required to retain SMAD8 in the endoplasmic reticulum.</text>
</comment>
<comment type="similarity">
    <text evidence="8">Belongs to the sphingomyelin synthase family.</text>
</comment>
<comment type="sequence caution" evidence="8">
    <conflict type="erroneous initiation">
        <sequence resource="EMBL-CDS" id="AAH80593"/>
    </conflict>
    <text>Extended N-terminus.</text>
</comment>
<evidence type="ECO:0000250" key="1"/>
<evidence type="ECO:0000255" key="2"/>
<evidence type="ECO:0000255" key="3">
    <source>
        <dbReference type="PROSITE-ProRule" id="PRU00184"/>
    </source>
</evidence>
<evidence type="ECO:0000269" key="4">
    <source>
    </source>
</evidence>
<evidence type="ECO:0000269" key="5">
    <source>
    </source>
</evidence>
<evidence type="ECO:0000269" key="6">
    <source>
    </source>
</evidence>
<evidence type="ECO:0000303" key="7">
    <source>
    </source>
</evidence>
<evidence type="ECO:0000305" key="8"/>
<evidence type="ECO:0000305" key="9">
    <source>
    </source>
</evidence>
<evidence type="ECO:0000305" key="10">
    <source>
    </source>
</evidence>
<evidence type="ECO:0000312" key="11">
    <source>
        <dbReference type="EMBL" id="BAB71586.1"/>
    </source>
</evidence>
<evidence type="ECO:0000312" key="12">
    <source>
        <dbReference type="HGNC" id="HGNC:26320"/>
    </source>
</evidence>
<evidence type="ECO:0007829" key="13">
    <source>
        <dbReference type="PDB" id="8IJR"/>
    </source>
</evidence>
<proteinExistence type="evidence at protein level"/>
<protein>
    <recommendedName>
        <fullName evidence="8">Sphingomyelin synthase-related protein 1</fullName>
        <shortName>SMSr</shortName>
        <ecNumber evidence="4">2.7.8.-</ecNumber>
    </recommendedName>
    <alternativeName>
        <fullName>Ceramide phosphoethanolamine synthase</fullName>
        <shortName>CPE synthase</shortName>
    </alternativeName>
    <alternativeName>
        <fullName>Sterile alpha motif domain-containing protein 8</fullName>
        <shortName>SAM domain-containing protein 8</shortName>
    </alternativeName>
</protein>
<keyword id="KW-0002">3D-structure</keyword>
<keyword id="KW-0025">Alternative splicing</keyword>
<keyword id="KW-0256">Endoplasmic reticulum</keyword>
<keyword id="KW-0443">Lipid metabolism</keyword>
<keyword id="KW-0472">Membrane</keyword>
<keyword id="KW-1267">Proteomics identification</keyword>
<keyword id="KW-1185">Reference proteome</keyword>
<keyword id="KW-0746">Sphingolipid metabolism</keyword>
<keyword id="KW-0808">Transferase</keyword>
<keyword id="KW-0812">Transmembrane</keyword>
<keyword id="KW-1133">Transmembrane helix</keyword>
<accession>Q96LT4</accession>
<accession>Q5JSC5</accession>
<accession>Q5JSC8</accession>
<accession>Q66K52</accession>
<organism evidence="11">
    <name type="scientific">Homo sapiens</name>
    <name type="common">Human</name>
    <dbReference type="NCBI Taxonomy" id="9606"/>
    <lineage>
        <taxon>Eukaryota</taxon>
        <taxon>Metazoa</taxon>
        <taxon>Chordata</taxon>
        <taxon>Craniata</taxon>
        <taxon>Vertebrata</taxon>
        <taxon>Euteleostomi</taxon>
        <taxon>Mammalia</taxon>
        <taxon>Eutheria</taxon>
        <taxon>Euarchontoglires</taxon>
        <taxon>Primates</taxon>
        <taxon>Haplorrhini</taxon>
        <taxon>Catarrhini</taxon>
        <taxon>Hominidae</taxon>
        <taxon>Homo</taxon>
    </lineage>
</organism>
<reference key="1">
    <citation type="submission" date="2003-02" db="UniProtKB">
        <authorList>
            <person name="Huitema K."/>
        </authorList>
    </citation>
    <scope>NUCLEOTIDE SEQUENCE [MRNA] (ISOFORM 1)</scope>
</reference>
<reference evidence="8" key="2">
    <citation type="journal article" date="2004" name="Nat. Genet.">
        <title>Complete sequencing and characterization of 21,243 full-length human cDNAs.</title>
        <authorList>
            <person name="Ota T."/>
            <person name="Suzuki Y."/>
            <person name="Nishikawa T."/>
            <person name="Otsuki T."/>
            <person name="Sugiyama T."/>
            <person name="Irie R."/>
            <person name="Wakamatsu A."/>
            <person name="Hayashi K."/>
            <person name="Sato H."/>
            <person name="Nagai K."/>
            <person name="Kimura K."/>
            <person name="Makita H."/>
            <person name="Sekine M."/>
            <person name="Obayashi M."/>
            <person name="Nishi T."/>
            <person name="Shibahara T."/>
            <person name="Tanaka T."/>
            <person name="Ishii S."/>
            <person name="Yamamoto J."/>
            <person name="Saito K."/>
            <person name="Kawai Y."/>
            <person name="Isono Y."/>
            <person name="Nakamura Y."/>
            <person name="Nagahari K."/>
            <person name="Murakami K."/>
            <person name="Yasuda T."/>
            <person name="Iwayanagi T."/>
            <person name="Wagatsuma M."/>
            <person name="Shiratori A."/>
            <person name="Sudo H."/>
            <person name="Hosoiri T."/>
            <person name="Kaku Y."/>
            <person name="Kodaira H."/>
            <person name="Kondo H."/>
            <person name="Sugawara M."/>
            <person name="Takahashi M."/>
            <person name="Kanda K."/>
            <person name="Yokoi T."/>
            <person name="Furuya T."/>
            <person name="Kikkawa E."/>
            <person name="Omura Y."/>
            <person name="Abe K."/>
            <person name="Kamihara K."/>
            <person name="Katsuta N."/>
            <person name="Sato K."/>
            <person name="Tanikawa M."/>
            <person name="Yamazaki M."/>
            <person name="Ninomiya K."/>
            <person name="Ishibashi T."/>
            <person name="Yamashita H."/>
            <person name="Murakawa K."/>
            <person name="Fujimori K."/>
            <person name="Tanai H."/>
            <person name="Kimata M."/>
            <person name="Watanabe M."/>
            <person name="Hiraoka S."/>
            <person name="Chiba Y."/>
            <person name="Ishida S."/>
            <person name="Ono Y."/>
            <person name="Takiguchi S."/>
            <person name="Watanabe S."/>
            <person name="Yosida M."/>
            <person name="Hotuta T."/>
            <person name="Kusano J."/>
            <person name="Kanehori K."/>
            <person name="Takahashi-Fujii A."/>
            <person name="Hara H."/>
            <person name="Tanase T.-O."/>
            <person name="Nomura Y."/>
            <person name="Togiya S."/>
            <person name="Komai F."/>
            <person name="Hara R."/>
            <person name="Takeuchi K."/>
            <person name="Arita M."/>
            <person name="Imose N."/>
            <person name="Musashino K."/>
            <person name="Yuuki H."/>
            <person name="Oshima A."/>
            <person name="Sasaki N."/>
            <person name="Aotsuka S."/>
            <person name="Yoshikawa Y."/>
            <person name="Matsunawa H."/>
            <person name="Ichihara T."/>
            <person name="Shiohata N."/>
            <person name="Sano S."/>
            <person name="Moriya S."/>
            <person name="Momiyama H."/>
            <person name="Satoh N."/>
            <person name="Takami S."/>
            <person name="Terashima Y."/>
            <person name="Suzuki O."/>
            <person name="Nakagawa S."/>
            <person name="Senoh A."/>
            <person name="Mizoguchi H."/>
            <person name="Goto Y."/>
            <person name="Shimizu F."/>
            <person name="Wakebe H."/>
            <person name="Hishigaki H."/>
            <person name="Watanabe T."/>
            <person name="Sugiyama A."/>
            <person name="Takemoto M."/>
            <person name="Kawakami B."/>
            <person name="Yamazaki M."/>
            <person name="Watanabe K."/>
            <person name="Kumagai A."/>
            <person name="Itakura S."/>
            <person name="Fukuzumi Y."/>
            <person name="Fujimori Y."/>
            <person name="Komiyama M."/>
            <person name="Tashiro H."/>
            <person name="Tanigami A."/>
            <person name="Fujiwara T."/>
            <person name="Ono T."/>
            <person name="Yamada K."/>
            <person name="Fujii Y."/>
            <person name="Ozaki K."/>
            <person name="Hirao M."/>
            <person name="Ohmori Y."/>
            <person name="Kawabata A."/>
            <person name="Hikiji T."/>
            <person name="Kobatake N."/>
            <person name="Inagaki H."/>
            <person name="Ikema Y."/>
            <person name="Okamoto S."/>
            <person name="Okitani R."/>
            <person name="Kawakami T."/>
            <person name="Noguchi S."/>
            <person name="Itoh T."/>
            <person name="Shigeta K."/>
            <person name="Senba T."/>
            <person name="Matsumura K."/>
            <person name="Nakajima Y."/>
            <person name="Mizuno T."/>
            <person name="Morinaga M."/>
            <person name="Sasaki M."/>
            <person name="Togashi T."/>
            <person name="Oyama M."/>
            <person name="Hata H."/>
            <person name="Watanabe M."/>
            <person name="Komatsu T."/>
            <person name="Mizushima-Sugano J."/>
            <person name="Satoh T."/>
            <person name="Shirai Y."/>
            <person name="Takahashi Y."/>
            <person name="Nakagawa K."/>
            <person name="Okumura K."/>
            <person name="Nagase T."/>
            <person name="Nomura N."/>
            <person name="Kikuchi H."/>
            <person name="Masuho Y."/>
            <person name="Yamashita R."/>
            <person name="Nakai K."/>
            <person name="Yada T."/>
            <person name="Nakamura Y."/>
            <person name="Ohara O."/>
            <person name="Isogai T."/>
            <person name="Sugano S."/>
        </authorList>
    </citation>
    <scope>NUCLEOTIDE SEQUENCE [LARGE SCALE MRNA] (ISOFORM 2)</scope>
    <source>
        <tissue evidence="11">Cerebellum</tissue>
    </source>
</reference>
<reference key="3">
    <citation type="journal article" date="2004" name="Nature">
        <title>The DNA sequence and comparative analysis of human chromosome 10.</title>
        <authorList>
            <person name="Deloukas P."/>
            <person name="Earthrowl M.E."/>
            <person name="Grafham D.V."/>
            <person name="Rubenfield M."/>
            <person name="French L."/>
            <person name="Steward C.A."/>
            <person name="Sims S.K."/>
            <person name="Jones M.C."/>
            <person name="Searle S."/>
            <person name="Scott C."/>
            <person name="Howe K."/>
            <person name="Hunt S.E."/>
            <person name="Andrews T.D."/>
            <person name="Gilbert J.G.R."/>
            <person name="Swarbreck D."/>
            <person name="Ashurst J.L."/>
            <person name="Taylor A."/>
            <person name="Battles J."/>
            <person name="Bird C.P."/>
            <person name="Ainscough R."/>
            <person name="Almeida J.P."/>
            <person name="Ashwell R.I.S."/>
            <person name="Ambrose K.D."/>
            <person name="Babbage A.K."/>
            <person name="Bagguley C.L."/>
            <person name="Bailey J."/>
            <person name="Banerjee R."/>
            <person name="Bates K."/>
            <person name="Beasley H."/>
            <person name="Bray-Allen S."/>
            <person name="Brown A.J."/>
            <person name="Brown J.Y."/>
            <person name="Burford D.C."/>
            <person name="Burrill W."/>
            <person name="Burton J."/>
            <person name="Cahill P."/>
            <person name="Camire D."/>
            <person name="Carter N.P."/>
            <person name="Chapman J.C."/>
            <person name="Clark S.Y."/>
            <person name="Clarke G."/>
            <person name="Clee C.M."/>
            <person name="Clegg S."/>
            <person name="Corby N."/>
            <person name="Coulson A."/>
            <person name="Dhami P."/>
            <person name="Dutta I."/>
            <person name="Dunn M."/>
            <person name="Faulkner L."/>
            <person name="Frankish A."/>
            <person name="Frankland J.A."/>
            <person name="Garner P."/>
            <person name="Garnett J."/>
            <person name="Gribble S."/>
            <person name="Griffiths C."/>
            <person name="Grocock R."/>
            <person name="Gustafson E."/>
            <person name="Hammond S."/>
            <person name="Harley J.L."/>
            <person name="Hart E."/>
            <person name="Heath P.D."/>
            <person name="Ho T.P."/>
            <person name="Hopkins B."/>
            <person name="Horne J."/>
            <person name="Howden P.J."/>
            <person name="Huckle E."/>
            <person name="Hynds C."/>
            <person name="Johnson C."/>
            <person name="Johnson D."/>
            <person name="Kana A."/>
            <person name="Kay M."/>
            <person name="Kimberley A.M."/>
            <person name="Kershaw J.K."/>
            <person name="Kokkinaki M."/>
            <person name="Laird G.K."/>
            <person name="Lawlor S."/>
            <person name="Lee H.M."/>
            <person name="Leongamornlert D.A."/>
            <person name="Laird G."/>
            <person name="Lloyd C."/>
            <person name="Lloyd D.M."/>
            <person name="Loveland J."/>
            <person name="Lovell J."/>
            <person name="McLaren S."/>
            <person name="McLay K.E."/>
            <person name="McMurray A."/>
            <person name="Mashreghi-Mohammadi M."/>
            <person name="Matthews L."/>
            <person name="Milne S."/>
            <person name="Nickerson T."/>
            <person name="Nguyen M."/>
            <person name="Overton-Larty E."/>
            <person name="Palmer S.A."/>
            <person name="Pearce A.V."/>
            <person name="Peck A.I."/>
            <person name="Pelan S."/>
            <person name="Phillimore B."/>
            <person name="Porter K."/>
            <person name="Rice C.M."/>
            <person name="Rogosin A."/>
            <person name="Ross M.T."/>
            <person name="Sarafidou T."/>
            <person name="Sehra H.K."/>
            <person name="Shownkeen R."/>
            <person name="Skuce C.D."/>
            <person name="Smith M."/>
            <person name="Standring L."/>
            <person name="Sycamore N."/>
            <person name="Tester J."/>
            <person name="Thorpe A."/>
            <person name="Torcasso W."/>
            <person name="Tracey A."/>
            <person name="Tromans A."/>
            <person name="Tsolas J."/>
            <person name="Wall M."/>
            <person name="Walsh J."/>
            <person name="Wang H."/>
            <person name="Weinstock K."/>
            <person name="West A.P."/>
            <person name="Willey D.L."/>
            <person name="Whitehead S.L."/>
            <person name="Wilming L."/>
            <person name="Wray P.W."/>
            <person name="Young L."/>
            <person name="Chen Y."/>
            <person name="Lovering R.C."/>
            <person name="Moschonas N.K."/>
            <person name="Siebert R."/>
            <person name="Fechtel K."/>
            <person name="Bentley D."/>
            <person name="Durbin R.M."/>
            <person name="Hubbard T."/>
            <person name="Doucette-Stamm L."/>
            <person name="Beck S."/>
            <person name="Smith D.R."/>
            <person name="Rogers J."/>
        </authorList>
    </citation>
    <scope>NUCLEOTIDE SEQUENCE [LARGE SCALE GENOMIC DNA]</scope>
</reference>
<reference key="4">
    <citation type="submission" date="2005-07" db="EMBL/GenBank/DDBJ databases">
        <authorList>
            <person name="Mural R.J."/>
            <person name="Istrail S."/>
            <person name="Sutton G.G."/>
            <person name="Florea L."/>
            <person name="Halpern A.L."/>
            <person name="Mobarry C.M."/>
            <person name="Lippert R."/>
            <person name="Walenz B."/>
            <person name="Shatkay H."/>
            <person name="Dew I."/>
            <person name="Miller J.R."/>
            <person name="Flanigan M.J."/>
            <person name="Edwards N.J."/>
            <person name="Bolanos R."/>
            <person name="Fasulo D."/>
            <person name="Halldorsson B.V."/>
            <person name="Hannenhalli S."/>
            <person name="Turner R."/>
            <person name="Yooseph S."/>
            <person name="Lu F."/>
            <person name="Nusskern D.R."/>
            <person name="Shue B.C."/>
            <person name="Zheng X.H."/>
            <person name="Zhong F."/>
            <person name="Delcher A.L."/>
            <person name="Huson D.H."/>
            <person name="Kravitz S.A."/>
            <person name="Mouchard L."/>
            <person name="Reinert K."/>
            <person name="Remington K.A."/>
            <person name="Clark A.G."/>
            <person name="Waterman M.S."/>
            <person name="Eichler E.E."/>
            <person name="Adams M.D."/>
            <person name="Hunkapiller M.W."/>
            <person name="Myers E.W."/>
            <person name="Venter J.C."/>
        </authorList>
    </citation>
    <scope>NUCLEOTIDE SEQUENCE [LARGE SCALE GENOMIC DNA]</scope>
</reference>
<reference key="5">
    <citation type="journal article" date="2004" name="Genome Res.">
        <title>The status, quality, and expansion of the NIH full-length cDNA project: the Mammalian Gene Collection (MGC).</title>
        <authorList>
            <consortium name="The MGC Project Team"/>
        </authorList>
    </citation>
    <scope>NUCLEOTIDE SEQUENCE [LARGE SCALE MRNA] (ISOFORM 1)</scope>
    <source>
        <tissue>Lung</tissue>
    </source>
</reference>
<reference key="6">
    <citation type="submission" date="2003-12" db="EMBL/GenBank/DDBJ databases">
        <authorList>
            <person name="Ebert L."/>
            <person name="Heil O."/>
            <person name="Hennig S."/>
            <person name="Neubert P."/>
            <person name="Partsch E."/>
            <person name="Peters M."/>
            <person name="Radelof U."/>
            <person name="Schneider D."/>
            <person name="Korn B."/>
        </authorList>
    </citation>
    <scope>NUCLEOTIDE SEQUENCE [MRNA] OF 198-359 (ISOFORM 1)</scope>
</reference>
<reference evidence="8" key="7">
    <citation type="journal article" date="2004" name="EMBO J.">
        <title>Identification of a family of animal sphingomyelin synthases.</title>
        <authorList>
            <person name="Huitema K."/>
            <person name="Van Den Dikkenberg J."/>
            <person name="Brouwers J.F.H.M."/>
            <person name="Holthuis J.C."/>
        </authorList>
    </citation>
    <scope>IDENTIFICATION</scope>
</reference>
<reference key="8">
    <citation type="journal article" date="2009" name="J. Cell Biol.">
        <title>Sphingomyelin synthase-related protein SMSr controls ceramide homeostasis in the ER.</title>
        <authorList>
            <person name="Vacaru A.M."/>
            <person name="Tafesse F.G."/>
            <person name="Ternes P."/>
            <person name="Kondylis V."/>
            <person name="Hermansson M."/>
            <person name="Brouwers J.F."/>
            <person name="Somerharju P."/>
            <person name="Rabouille C."/>
            <person name="Holthuis J.C."/>
        </authorList>
    </citation>
    <scope>SUBSTRATE SPECIFICITY</scope>
    <scope>SUBCELLULAR LOCATION</scope>
    <scope>FUNCTION</scope>
    <scope>MUTAGENESIS OF ASP-348</scope>
    <scope>IDENTIFICATION BY MASS SPECTROMETRY</scope>
    <scope>CATALYTIC ACTIVITY</scope>
</reference>
<reference key="9">
    <citation type="journal article" date="2021" name="J. Biol. Chem.">
        <title>Sphingomyelin synthase-related protein generates diacylglycerol via the hydrolysis of glycerophospholipids in the absence of ceramide.</title>
        <authorList>
            <person name="Murakami C."/>
            <person name="Sakane F."/>
        </authorList>
    </citation>
    <scope>FUNCTION</scope>
</reference>
<reference key="10">
    <citation type="journal article" date="2024" name="Nat. Struct. Mol. Biol.">
        <title>Cryo-EM structure of human sphingomyelin synthase and its mechanistic implications for sphingomyelin synthesis.</title>
        <authorList>
            <person name="Hu K."/>
            <person name="Zhang Q."/>
            <person name="Chen Y."/>
            <person name="Yang J."/>
            <person name="Xia Y."/>
            <person name="Rao B."/>
            <person name="Li S."/>
            <person name="Shen Y."/>
            <person name="Cao M."/>
            <person name="Lu H."/>
            <person name="Qin A."/>
            <person name="Jiang X.C."/>
            <person name="Yao D."/>
            <person name="Zhao J."/>
            <person name="Zhou L."/>
            <person name="Cao Y."/>
        </authorList>
    </citation>
    <scope>FUNCTION</scope>
    <scope>CATALYTIC ACTIVITY</scope>
</reference>
<feature type="chain" id="PRO_0000221080" description="Sphingomyelin synthase-related protein 1">
    <location>
        <begin position="1"/>
        <end position="415"/>
    </location>
</feature>
<feature type="transmembrane region" description="Helical" evidence="2">
    <location>
        <begin position="153"/>
        <end position="173"/>
    </location>
</feature>
<feature type="transmembrane region" description="Helical" evidence="2">
    <location>
        <begin position="201"/>
        <end position="221"/>
    </location>
</feature>
<feature type="transmembrane region" description="Helical" evidence="2">
    <location>
        <begin position="232"/>
        <end position="252"/>
    </location>
</feature>
<feature type="transmembrane region" description="Helical" evidence="2">
    <location>
        <begin position="277"/>
        <end position="297"/>
    </location>
</feature>
<feature type="transmembrane region" description="Helical" evidence="2">
    <location>
        <begin position="322"/>
        <end position="342"/>
    </location>
</feature>
<feature type="transmembrane region" description="Helical" evidence="2">
    <location>
        <begin position="347"/>
        <end position="367"/>
    </location>
</feature>
<feature type="topological domain" description="Cytoplasmic" evidence="2">
    <location>
        <begin position="368"/>
        <end position="415"/>
    </location>
</feature>
<feature type="domain" description="SAM" evidence="3">
    <location>
        <begin position="12"/>
        <end position="78"/>
    </location>
</feature>
<feature type="active site" evidence="1">
    <location>
        <position position="301"/>
    </location>
</feature>
<feature type="active site" evidence="1">
    <location>
        <position position="344"/>
    </location>
</feature>
<feature type="active site">
    <location>
        <position position="348"/>
    </location>
</feature>
<feature type="splice variant" id="VSP_038403" description="In isoform 2." evidence="7">
    <original>YTPRSWNFLHTL</original>
    <variation>CKYLFSASMRIR</variation>
    <location>
        <begin position="315"/>
        <end position="326"/>
    </location>
</feature>
<feature type="splice variant" id="VSP_038404" description="In isoform 2." evidence="7">
    <location>
        <begin position="327"/>
        <end position="415"/>
    </location>
</feature>
<feature type="mutagenesis site" description="Abolishes CPE synthase activity." evidence="4">
    <original>D</original>
    <variation>E</variation>
    <location>
        <position position="348"/>
    </location>
</feature>
<feature type="helix" evidence="13">
    <location>
        <begin position="149"/>
        <end position="174"/>
    </location>
</feature>
<feature type="strand" evidence="13">
    <location>
        <begin position="176"/>
        <end position="178"/>
    </location>
</feature>
<feature type="strand" evidence="13">
    <location>
        <begin position="181"/>
        <end position="183"/>
    </location>
</feature>
<feature type="strand" evidence="13">
    <location>
        <begin position="188"/>
        <end position="190"/>
    </location>
</feature>
<feature type="turn" evidence="13">
    <location>
        <begin position="191"/>
        <end position="193"/>
    </location>
</feature>
<feature type="helix" evidence="13">
    <location>
        <begin position="200"/>
        <end position="220"/>
    </location>
</feature>
<feature type="helix" evidence="13">
    <location>
        <begin position="225"/>
        <end position="249"/>
    </location>
</feature>
<feature type="turn" evidence="13">
    <location>
        <begin position="255"/>
        <end position="260"/>
    </location>
</feature>
<feature type="strand" evidence="13">
    <location>
        <begin position="268"/>
        <end position="271"/>
    </location>
</feature>
<feature type="helix" evidence="13">
    <location>
        <begin position="272"/>
        <end position="280"/>
    </location>
</feature>
<feature type="turn" evidence="13">
    <location>
        <begin position="281"/>
        <end position="284"/>
    </location>
</feature>
<feature type="turn" evidence="13">
    <location>
        <begin position="286"/>
        <end position="289"/>
    </location>
</feature>
<feature type="helix" evidence="13">
    <location>
        <begin position="301"/>
        <end position="314"/>
    </location>
</feature>
<feature type="helix" evidence="13">
    <location>
        <begin position="323"/>
        <end position="340"/>
    </location>
</feature>
<feature type="helix" evidence="13">
    <location>
        <begin position="346"/>
        <end position="369"/>
    </location>
</feature>
<feature type="turn" evidence="13">
    <location>
        <begin position="372"/>
        <end position="374"/>
    </location>
</feature>
<feature type="helix" evidence="13">
    <location>
        <begin position="386"/>
        <end position="389"/>
    </location>
</feature>
<sequence length="415" mass="48321">MAGPNQLCIRRWTTKHVAVWLKDEGFFEYVDILCNKHRLDGITLLTLTEYDLRSPPLEIKVLGDIKRLMLSVRKLQKIHIDVLEEMGYNSDSPMGSMTPFISALQSTDWLCNGELSHDCDGPITDLNSDQYQYMNGKNKHSVRRLDPEYWKTILSCIYVFIVFGFTSFIMVIVHERVPDMQTYPPLPDIFLDSVPRIPWAFAMTEVCGMILCYIWLLVLLLHKHRSILLRRLCSLMGTVFLLRCFTMFVTSLSVPGQHLQCTGKIYGSVWEKLHRAFAIWSGFGMTLTGVHTCGDYMFSGHTVVLTMLNFFVTEYTPRSWNFLHTLSWVLNLFGIFFILAAHEHYSIDVFIAFYITTRLFLYYHTLANTRAYQQSRRARIWFPMFSFFECNVNGTVPNEYCWPFSKPAIMKRLIG</sequence>
<gene>
    <name evidence="12" type="primary">SAMD8</name>
</gene>